<proteinExistence type="evidence at transcript level"/>
<protein>
    <recommendedName>
        <fullName>DEAD-box ATP-dependent RNA helicase 16</fullName>
        <ecNumber>3.6.4.13</ecNumber>
    </recommendedName>
</protein>
<feature type="chain" id="PRO_0000239158" description="DEAD-box ATP-dependent RNA helicase 16">
    <location>
        <begin position="1"/>
        <end position="626"/>
    </location>
</feature>
<feature type="domain" description="Helicase ATP-binding" evidence="2">
    <location>
        <begin position="77"/>
        <end position="259"/>
    </location>
</feature>
<feature type="domain" description="Helicase C-terminal" evidence="3">
    <location>
        <begin position="293"/>
        <end position="477"/>
    </location>
</feature>
<feature type="region of interest" description="Disordered" evidence="4">
    <location>
        <begin position="1"/>
        <end position="48"/>
    </location>
</feature>
<feature type="region of interest" description="Disordered" evidence="4">
    <location>
        <begin position="363"/>
        <end position="388"/>
    </location>
</feature>
<feature type="region of interest" description="Disordered" evidence="4">
    <location>
        <begin position="568"/>
        <end position="626"/>
    </location>
</feature>
<feature type="coiled-coil region" evidence="1">
    <location>
        <begin position="9"/>
        <end position="47"/>
    </location>
</feature>
<feature type="coiled-coil region" evidence="1">
    <location>
        <begin position="356"/>
        <end position="385"/>
    </location>
</feature>
<feature type="short sequence motif" description="Q motif">
    <location>
        <begin position="46"/>
        <end position="74"/>
    </location>
</feature>
<feature type="short sequence motif" description="DEAD box">
    <location>
        <begin position="207"/>
        <end position="210"/>
    </location>
</feature>
<feature type="compositionally biased region" description="Acidic residues" evidence="4">
    <location>
        <begin position="12"/>
        <end position="27"/>
    </location>
</feature>
<feature type="compositionally biased region" description="Basic and acidic residues" evidence="4">
    <location>
        <begin position="363"/>
        <end position="381"/>
    </location>
</feature>
<feature type="binding site" evidence="2">
    <location>
        <begin position="90"/>
        <end position="97"/>
    </location>
    <ligand>
        <name>ATP</name>
        <dbReference type="ChEBI" id="CHEBI:30616"/>
    </ligand>
</feature>
<feature type="sequence conflict" description="In Ref. 4; CAA09206." evidence="5" ref="4">
    <original>S</original>
    <variation>T</variation>
    <location>
        <position position="386"/>
    </location>
</feature>
<name>RH16_ARATH</name>
<sequence length="626" mass="69502">MGKTKLKPVEDVNSEVVDEVEKAEEVEEQRNDREQEEEQKEEEAPKSFEELGLDSRLIRALTKKGIEKPTLIQQSAIPYILEGKDVVARAKTGSGKTLAYLLPLLQKLFSADSVSKKKLAPSAFILVPSRELCQQVYTEVSSLIELCRVQLKAVQLTSSMSASDMRNALAGLPEILVSTPACIPKCFAAGVLEPTAVSESLSILVLDEADLLLSYGYEDNLRSVTSIIPRRCQCLLMSATTSSDVEKLKKLILHNPIVLTLTEDNDKEEAVPSNVQQFWISCSAQDKLLHILALLKLEVVQKKILIFINTIDMGFRLKLFLEKFGIKSAILNGELPQNSRLHILEQFNAGLFDYLIATDDNSQTKKQKEEAKGEANKENKKNNKRSKPKLDAEFGVVRGIDFKKVHTVINFDMPQSVTGYIHRIGRTGRAYSSGSSVSLISPDEMEGFEDIKSFLASDKNKDIDIITPFPLLTENAVESLRYRAEDVAKSVTKIAVRESRAQDLRNEIINSEKLKAHFEANPRDLDLLRHDKPLSKTAPAPHLKDIPEYLVDAKTQEASKMVKLARAAMGNTRRSGGGGGRNNKNKKRSRKGSDPLKTFNPNGSKRGAVGQKDGKDSSSTKKQKTV</sequence>
<accession>Q9SW44</accession>
<accession>Q9ZS05</accession>
<comment type="catalytic activity">
    <reaction>
        <text>ATP + H2O = ADP + phosphate + H(+)</text>
        <dbReference type="Rhea" id="RHEA:13065"/>
        <dbReference type="ChEBI" id="CHEBI:15377"/>
        <dbReference type="ChEBI" id="CHEBI:15378"/>
        <dbReference type="ChEBI" id="CHEBI:30616"/>
        <dbReference type="ChEBI" id="CHEBI:43474"/>
        <dbReference type="ChEBI" id="CHEBI:456216"/>
        <dbReference type="EC" id="3.6.4.13"/>
    </reaction>
</comment>
<comment type="domain">
    <text>The Q motif is unique to and characteristic of the DEAD box family of RNA helicases and controls ATP binding and hydrolysis.</text>
</comment>
<comment type="similarity">
    <text evidence="5">Belongs to the DEAD box helicase family. DDX56/DBP9 subfamily.</text>
</comment>
<comment type="sequence caution" evidence="5">
    <conflict type="frameshift">
        <sequence resource="EMBL-CDS" id="CAA09206"/>
    </conflict>
</comment>
<organism>
    <name type="scientific">Arabidopsis thaliana</name>
    <name type="common">Mouse-ear cress</name>
    <dbReference type="NCBI Taxonomy" id="3702"/>
    <lineage>
        <taxon>Eukaryota</taxon>
        <taxon>Viridiplantae</taxon>
        <taxon>Streptophyta</taxon>
        <taxon>Embryophyta</taxon>
        <taxon>Tracheophyta</taxon>
        <taxon>Spermatophyta</taxon>
        <taxon>Magnoliopsida</taxon>
        <taxon>eudicotyledons</taxon>
        <taxon>Gunneridae</taxon>
        <taxon>Pentapetalae</taxon>
        <taxon>rosids</taxon>
        <taxon>malvids</taxon>
        <taxon>Brassicales</taxon>
        <taxon>Brassicaceae</taxon>
        <taxon>Camelineae</taxon>
        <taxon>Arabidopsis</taxon>
    </lineage>
</organism>
<keyword id="KW-0067">ATP-binding</keyword>
<keyword id="KW-0175">Coiled coil</keyword>
<keyword id="KW-0347">Helicase</keyword>
<keyword id="KW-0378">Hydrolase</keyword>
<keyword id="KW-0547">Nucleotide-binding</keyword>
<keyword id="KW-1185">Reference proteome</keyword>
<keyword id="KW-0694">RNA-binding</keyword>
<reference key="1">
    <citation type="journal article" date="1999" name="Nature">
        <title>Sequence and analysis of chromosome 4 of the plant Arabidopsis thaliana.</title>
        <authorList>
            <person name="Mayer K.F.X."/>
            <person name="Schueller C."/>
            <person name="Wambutt R."/>
            <person name="Murphy G."/>
            <person name="Volckaert G."/>
            <person name="Pohl T."/>
            <person name="Duesterhoeft A."/>
            <person name="Stiekema W."/>
            <person name="Entian K.-D."/>
            <person name="Terryn N."/>
            <person name="Harris B."/>
            <person name="Ansorge W."/>
            <person name="Brandt P."/>
            <person name="Grivell L.A."/>
            <person name="Rieger M."/>
            <person name="Weichselgartner M."/>
            <person name="de Simone V."/>
            <person name="Obermaier B."/>
            <person name="Mache R."/>
            <person name="Mueller M."/>
            <person name="Kreis M."/>
            <person name="Delseny M."/>
            <person name="Puigdomenech P."/>
            <person name="Watson M."/>
            <person name="Schmidtheini T."/>
            <person name="Reichert B."/>
            <person name="Portetelle D."/>
            <person name="Perez-Alonso M."/>
            <person name="Boutry M."/>
            <person name="Bancroft I."/>
            <person name="Vos P."/>
            <person name="Hoheisel J."/>
            <person name="Zimmermann W."/>
            <person name="Wedler H."/>
            <person name="Ridley P."/>
            <person name="Langham S.-A."/>
            <person name="McCullagh B."/>
            <person name="Bilham L."/>
            <person name="Robben J."/>
            <person name="van der Schueren J."/>
            <person name="Grymonprez B."/>
            <person name="Chuang Y.-J."/>
            <person name="Vandenbussche F."/>
            <person name="Braeken M."/>
            <person name="Weltjens I."/>
            <person name="Voet M."/>
            <person name="Bastiaens I."/>
            <person name="Aert R."/>
            <person name="Defoor E."/>
            <person name="Weitzenegger T."/>
            <person name="Bothe G."/>
            <person name="Ramsperger U."/>
            <person name="Hilbert H."/>
            <person name="Braun M."/>
            <person name="Holzer E."/>
            <person name="Brandt A."/>
            <person name="Peters S."/>
            <person name="van Staveren M."/>
            <person name="Dirkse W."/>
            <person name="Mooijman P."/>
            <person name="Klein Lankhorst R."/>
            <person name="Rose M."/>
            <person name="Hauf J."/>
            <person name="Koetter P."/>
            <person name="Berneiser S."/>
            <person name="Hempel S."/>
            <person name="Feldpausch M."/>
            <person name="Lamberth S."/>
            <person name="Van den Daele H."/>
            <person name="De Keyser A."/>
            <person name="Buysshaert C."/>
            <person name="Gielen J."/>
            <person name="Villarroel R."/>
            <person name="De Clercq R."/>
            <person name="van Montagu M."/>
            <person name="Rogers J."/>
            <person name="Cronin A."/>
            <person name="Quail M.A."/>
            <person name="Bray-Allen S."/>
            <person name="Clark L."/>
            <person name="Doggett J."/>
            <person name="Hall S."/>
            <person name="Kay M."/>
            <person name="Lennard N."/>
            <person name="McLay K."/>
            <person name="Mayes R."/>
            <person name="Pettett A."/>
            <person name="Rajandream M.A."/>
            <person name="Lyne M."/>
            <person name="Benes V."/>
            <person name="Rechmann S."/>
            <person name="Borkova D."/>
            <person name="Bloecker H."/>
            <person name="Scharfe M."/>
            <person name="Grimm M."/>
            <person name="Loehnert T.-H."/>
            <person name="Dose S."/>
            <person name="de Haan M."/>
            <person name="Maarse A.C."/>
            <person name="Schaefer M."/>
            <person name="Mueller-Auer S."/>
            <person name="Gabel C."/>
            <person name="Fuchs M."/>
            <person name="Fartmann B."/>
            <person name="Granderath K."/>
            <person name="Dauner D."/>
            <person name="Herzl A."/>
            <person name="Neumann S."/>
            <person name="Argiriou A."/>
            <person name="Vitale D."/>
            <person name="Liguori R."/>
            <person name="Piravandi E."/>
            <person name="Massenet O."/>
            <person name="Quigley F."/>
            <person name="Clabauld G."/>
            <person name="Muendlein A."/>
            <person name="Felber R."/>
            <person name="Schnabl S."/>
            <person name="Hiller R."/>
            <person name="Schmidt W."/>
            <person name="Lecharny A."/>
            <person name="Aubourg S."/>
            <person name="Chefdor F."/>
            <person name="Cooke R."/>
            <person name="Berger C."/>
            <person name="Monfort A."/>
            <person name="Casacuberta E."/>
            <person name="Gibbons T."/>
            <person name="Weber N."/>
            <person name="Vandenbol M."/>
            <person name="Bargues M."/>
            <person name="Terol J."/>
            <person name="Torres A."/>
            <person name="Perez-Perez A."/>
            <person name="Purnelle B."/>
            <person name="Bent E."/>
            <person name="Johnson S."/>
            <person name="Tacon D."/>
            <person name="Jesse T."/>
            <person name="Heijnen L."/>
            <person name="Schwarz S."/>
            <person name="Scholler P."/>
            <person name="Heber S."/>
            <person name="Francs P."/>
            <person name="Bielke C."/>
            <person name="Frishman D."/>
            <person name="Haase D."/>
            <person name="Lemcke K."/>
            <person name="Mewes H.-W."/>
            <person name="Stocker S."/>
            <person name="Zaccaria P."/>
            <person name="Bevan M."/>
            <person name="Wilson R.K."/>
            <person name="de la Bastide M."/>
            <person name="Habermann K."/>
            <person name="Parnell L."/>
            <person name="Dedhia N."/>
            <person name="Gnoj L."/>
            <person name="Schutz K."/>
            <person name="Huang E."/>
            <person name="Spiegel L."/>
            <person name="Sekhon M."/>
            <person name="Murray J."/>
            <person name="Sheet P."/>
            <person name="Cordes M."/>
            <person name="Abu-Threideh J."/>
            <person name="Stoneking T."/>
            <person name="Kalicki J."/>
            <person name="Graves T."/>
            <person name="Harmon G."/>
            <person name="Edwards J."/>
            <person name="Latreille P."/>
            <person name="Courtney L."/>
            <person name="Cloud J."/>
            <person name="Abbott A."/>
            <person name="Scott K."/>
            <person name="Johnson D."/>
            <person name="Minx P."/>
            <person name="Bentley D."/>
            <person name="Fulton B."/>
            <person name="Miller N."/>
            <person name="Greco T."/>
            <person name="Kemp K."/>
            <person name="Kramer J."/>
            <person name="Fulton L."/>
            <person name="Mardis E."/>
            <person name="Dante M."/>
            <person name="Pepin K."/>
            <person name="Hillier L.W."/>
            <person name="Nelson J."/>
            <person name="Spieth J."/>
            <person name="Ryan E."/>
            <person name="Andrews S."/>
            <person name="Geisel C."/>
            <person name="Layman D."/>
            <person name="Du H."/>
            <person name="Ali J."/>
            <person name="Berghoff A."/>
            <person name="Jones K."/>
            <person name="Drone K."/>
            <person name="Cotton M."/>
            <person name="Joshu C."/>
            <person name="Antonoiu B."/>
            <person name="Zidanic M."/>
            <person name="Strong C."/>
            <person name="Sun H."/>
            <person name="Lamar B."/>
            <person name="Yordan C."/>
            <person name="Ma P."/>
            <person name="Zhong J."/>
            <person name="Preston R."/>
            <person name="Vil D."/>
            <person name="Shekher M."/>
            <person name="Matero A."/>
            <person name="Shah R."/>
            <person name="Swaby I.K."/>
            <person name="O'Shaughnessy A."/>
            <person name="Rodriguez M."/>
            <person name="Hoffman J."/>
            <person name="Till S."/>
            <person name="Granat S."/>
            <person name="Shohdy N."/>
            <person name="Hasegawa A."/>
            <person name="Hameed A."/>
            <person name="Lodhi M."/>
            <person name="Johnson A."/>
            <person name="Chen E."/>
            <person name="Marra M.A."/>
            <person name="Martienssen R."/>
            <person name="McCombie W.R."/>
        </authorList>
    </citation>
    <scope>NUCLEOTIDE SEQUENCE [LARGE SCALE GENOMIC DNA]</scope>
    <source>
        <strain>cv. Columbia</strain>
    </source>
</reference>
<reference key="2">
    <citation type="journal article" date="2017" name="Plant J.">
        <title>Araport11: a complete reannotation of the Arabidopsis thaliana reference genome.</title>
        <authorList>
            <person name="Cheng C.Y."/>
            <person name="Krishnakumar V."/>
            <person name="Chan A.P."/>
            <person name="Thibaud-Nissen F."/>
            <person name="Schobel S."/>
            <person name="Town C.D."/>
        </authorList>
    </citation>
    <scope>GENOME REANNOTATION</scope>
    <source>
        <strain>cv. Columbia</strain>
    </source>
</reference>
<reference key="3">
    <citation type="journal article" date="2003" name="Science">
        <title>Empirical analysis of transcriptional activity in the Arabidopsis genome.</title>
        <authorList>
            <person name="Yamada K."/>
            <person name="Lim J."/>
            <person name="Dale J.M."/>
            <person name="Chen H."/>
            <person name="Shinn P."/>
            <person name="Palm C.J."/>
            <person name="Southwick A.M."/>
            <person name="Wu H.C."/>
            <person name="Kim C.J."/>
            <person name="Nguyen M."/>
            <person name="Pham P.K."/>
            <person name="Cheuk R.F."/>
            <person name="Karlin-Newmann G."/>
            <person name="Liu S.X."/>
            <person name="Lam B."/>
            <person name="Sakano H."/>
            <person name="Wu T."/>
            <person name="Yu G."/>
            <person name="Miranda M."/>
            <person name="Quach H.L."/>
            <person name="Tripp M."/>
            <person name="Chang C.H."/>
            <person name="Lee J.M."/>
            <person name="Toriumi M.J."/>
            <person name="Chan M.M."/>
            <person name="Tang C.C."/>
            <person name="Onodera C.S."/>
            <person name="Deng J.M."/>
            <person name="Akiyama K."/>
            <person name="Ansari Y."/>
            <person name="Arakawa T."/>
            <person name="Banh J."/>
            <person name="Banno F."/>
            <person name="Bowser L."/>
            <person name="Brooks S.Y."/>
            <person name="Carninci P."/>
            <person name="Chao Q."/>
            <person name="Choy N."/>
            <person name="Enju A."/>
            <person name="Goldsmith A.D."/>
            <person name="Gurjal M."/>
            <person name="Hansen N.F."/>
            <person name="Hayashizaki Y."/>
            <person name="Johnson-Hopson C."/>
            <person name="Hsuan V.W."/>
            <person name="Iida K."/>
            <person name="Karnes M."/>
            <person name="Khan S."/>
            <person name="Koesema E."/>
            <person name="Ishida J."/>
            <person name="Jiang P.X."/>
            <person name="Jones T."/>
            <person name="Kawai J."/>
            <person name="Kamiya A."/>
            <person name="Meyers C."/>
            <person name="Nakajima M."/>
            <person name="Narusaka M."/>
            <person name="Seki M."/>
            <person name="Sakurai T."/>
            <person name="Satou M."/>
            <person name="Tamse R."/>
            <person name="Vaysberg M."/>
            <person name="Wallender E.K."/>
            <person name="Wong C."/>
            <person name="Yamamura Y."/>
            <person name="Yuan S."/>
            <person name="Shinozaki K."/>
            <person name="Davis R.W."/>
            <person name="Theologis A."/>
            <person name="Ecker J.R."/>
        </authorList>
    </citation>
    <scope>NUCLEOTIDE SEQUENCE [LARGE SCALE MRNA]</scope>
    <source>
        <strain>cv. Columbia</strain>
    </source>
</reference>
<reference key="4">
    <citation type="journal article" date="1999" name="Nucleic Acids Res.">
        <title>The DEAD box RNA helicase family in Arabidopsis thaliana.</title>
        <authorList>
            <person name="Aubourg S."/>
            <person name="Kreis M."/>
            <person name="Lecharny A."/>
        </authorList>
    </citation>
    <scope>NUCLEOTIDE SEQUENCE [MRNA] OF 343-626</scope>
    <source>
        <strain>cv. Columbia</strain>
    </source>
</reference>
<reference key="5">
    <citation type="journal article" date="2004" name="Plant Biotechnol. J.">
        <title>DEAD-box RNA helicases in Arabidopsis thaliana: establishing a link between quantitative expression, gene structure and evolution of a family of genes.</title>
        <authorList>
            <person name="Mingam A."/>
            <person name="Toffano-Nioche C."/>
            <person name="Brunaud V."/>
            <person name="Boudet N."/>
            <person name="Kreis M."/>
            <person name="Lecharny A."/>
        </authorList>
    </citation>
    <scope>GENE FAMILY</scope>
    <scope>NOMENCLATURE</scope>
</reference>
<reference key="6">
    <citation type="journal article" date="2013" name="PLoS ONE">
        <title>Genome-wide comparative in silico analysis of the RNA helicase gene family in Zea mays and Glycine max: a comparison with Arabidopsis and Oryza sativa.</title>
        <authorList>
            <person name="Xu R."/>
            <person name="Zhang S."/>
            <person name="Huang J."/>
            <person name="Zheng C."/>
        </authorList>
    </citation>
    <scope>GENE FAMILY</scope>
</reference>
<gene>
    <name type="primary">RH16</name>
    <name type="ordered locus">At4g34910</name>
    <name type="ORF">T11I11.150</name>
</gene>
<dbReference type="EC" id="3.6.4.13"/>
<dbReference type="EMBL" id="AL079347">
    <property type="protein sequence ID" value="CAB45452.1"/>
    <property type="molecule type" value="Genomic_DNA"/>
</dbReference>
<dbReference type="EMBL" id="AL161586">
    <property type="protein sequence ID" value="CAB80208.1"/>
    <property type="molecule type" value="Genomic_DNA"/>
</dbReference>
<dbReference type="EMBL" id="CP002687">
    <property type="protein sequence ID" value="AEE86436.1"/>
    <property type="molecule type" value="Genomic_DNA"/>
</dbReference>
<dbReference type="EMBL" id="BT002816">
    <property type="protein sequence ID" value="AAO22635.1"/>
    <property type="molecule type" value="mRNA"/>
</dbReference>
<dbReference type="EMBL" id="BT004442">
    <property type="protein sequence ID" value="AAO42436.1"/>
    <property type="molecule type" value="mRNA"/>
</dbReference>
<dbReference type="EMBL" id="AJ010467">
    <property type="protein sequence ID" value="CAA09206.1"/>
    <property type="status" value="ALT_FRAME"/>
    <property type="molecule type" value="mRNA"/>
</dbReference>
<dbReference type="PIR" id="T10237">
    <property type="entry name" value="T10237"/>
</dbReference>
<dbReference type="PIR" id="T51745">
    <property type="entry name" value="T51745"/>
</dbReference>
<dbReference type="RefSeq" id="NP_195217.1">
    <property type="nucleotide sequence ID" value="NM_119657.3"/>
</dbReference>
<dbReference type="SMR" id="Q9SW44"/>
<dbReference type="BioGRID" id="14925">
    <property type="interactions" value="8"/>
</dbReference>
<dbReference type="FunCoup" id="Q9SW44">
    <property type="interactions" value="4111"/>
</dbReference>
<dbReference type="STRING" id="3702.Q9SW44"/>
<dbReference type="PaxDb" id="3702-AT4G34910.1"/>
<dbReference type="ProteomicsDB" id="236938"/>
<dbReference type="EnsemblPlants" id="AT4G34910.1">
    <property type="protein sequence ID" value="AT4G34910.1"/>
    <property type="gene ID" value="AT4G34910"/>
</dbReference>
<dbReference type="GeneID" id="829643"/>
<dbReference type="Gramene" id="AT4G34910.1">
    <property type="protein sequence ID" value="AT4G34910.1"/>
    <property type="gene ID" value="AT4G34910"/>
</dbReference>
<dbReference type="KEGG" id="ath:AT4G34910"/>
<dbReference type="Araport" id="AT4G34910"/>
<dbReference type="TAIR" id="AT4G34910"/>
<dbReference type="eggNOG" id="KOG0346">
    <property type="taxonomic scope" value="Eukaryota"/>
</dbReference>
<dbReference type="HOGENOM" id="CLU_003041_17_1_1"/>
<dbReference type="InParanoid" id="Q9SW44"/>
<dbReference type="OMA" id="NASEQCV"/>
<dbReference type="PhylomeDB" id="Q9SW44"/>
<dbReference type="CD-CODE" id="4299E36E">
    <property type="entry name" value="Nucleolus"/>
</dbReference>
<dbReference type="PRO" id="PR:Q9SW44"/>
<dbReference type="Proteomes" id="UP000006548">
    <property type="component" value="Chromosome 4"/>
</dbReference>
<dbReference type="ExpressionAtlas" id="Q9SW44">
    <property type="expression patterns" value="baseline and differential"/>
</dbReference>
<dbReference type="GO" id="GO:0005524">
    <property type="term" value="F:ATP binding"/>
    <property type="evidence" value="ECO:0007669"/>
    <property type="project" value="UniProtKB-KW"/>
</dbReference>
<dbReference type="GO" id="GO:0016887">
    <property type="term" value="F:ATP hydrolysis activity"/>
    <property type="evidence" value="ECO:0007669"/>
    <property type="project" value="RHEA"/>
</dbReference>
<dbReference type="GO" id="GO:0003729">
    <property type="term" value="F:mRNA binding"/>
    <property type="evidence" value="ECO:0000314"/>
    <property type="project" value="TAIR"/>
</dbReference>
<dbReference type="GO" id="GO:0003724">
    <property type="term" value="F:RNA helicase activity"/>
    <property type="evidence" value="ECO:0007669"/>
    <property type="project" value="UniProtKB-EC"/>
</dbReference>
<dbReference type="CDD" id="cd17961">
    <property type="entry name" value="DEADc_DDX56"/>
    <property type="match status" value="1"/>
</dbReference>
<dbReference type="CDD" id="cd18787">
    <property type="entry name" value="SF2_C_DEAD"/>
    <property type="match status" value="1"/>
</dbReference>
<dbReference type="Gene3D" id="3.40.50.300">
    <property type="entry name" value="P-loop containing nucleotide triphosphate hydrolases"/>
    <property type="match status" value="2"/>
</dbReference>
<dbReference type="InterPro" id="IPR011545">
    <property type="entry name" value="DEAD/DEAH_box_helicase_dom"/>
</dbReference>
<dbReference type="InterPro" id="IPR050079">
    <property type="entry name" value="DEAD_box_RNA_helicase"/>
</dbReference>
<dbReference type="InterPro" id="IPR014001">
    <property type="entry name" value="Helicase_ATP-bd"/>
</dbReference>
<dbReference type="InterPro" id="IPR001650">
    <property type="entry name" value="Helicase_C-like"/>
</dbReference>
<dbReference type="InterPro" id="IPR027417">
    <property type="entry name" value="P-loop_NTPase"/>
</dbReference>
<dbReference type="InterPro" id="IPR014014">
    <property type="entry name" value="RNA_helicase_DEAD_Q_motif"/>
</dbReference>
<dbReference type="PANTHER" id="PTHR47959">
    <property type="entry name" value="ATP-DEPENDENT RNA HELICASE RHLE-RELATED"/>
    <property type="match status" value="1"/>
</dbReference>
<dbReference type="PANTHER" id="PTHR47959:SF21">
    <property type="entry name" value="DEAD-BOX HELICASE 56"/>
    <property type="match status" value="1"/>
</dbReference>
<dbReference type="Pfam" id="PF00270">
    <property type="entry name" value="DEAD"/>
    <property type="match status" value="1"/>
</dbReference>
<dbReference type="Pfam" id="PF00271">
    <property type="entry name" value="Helicase_C"/>
    <property type="match status" value="1"/>
</dbReference>
<dbReference type="SMART" id="SM00487">
    <property type="entry name" value="DEXDc"/>
    <property type="match status" value="1"/>
</dbReference>
<dbReference type="SMART" id="SM00490">
    <property type="entry name" value="HELICc"/>
    <property type="match status" value="1"/>
</dbReference>
<dbReference type="SUPFAM" id="SSF52540">
    <property type="entry name" value="P-loop containing nucleoside triphosphate hydrolases"/>
    <property type="match status" value="2"/>
</dbReference>
<dbReference type="PROSITE" id="PS51192">
    <property type="entry name" value="HELICASE_ATP_BIND_1"/>
    <property type="match status" value="1"/>
</dbReference>
<dbReference type="PROSITE" id="PS51194">
    <property type="entry name" value="HELICASE_CTER"/>
    <property type="match status" value="1"/>
</dbReference>
<dbReference type="PROSITE" id="PS51195">
    <property type="entry name" value="Q_MOTIF"/>
    <property type="match status" value="1"/>
</dbReference>
<evidence type="ECO:0000255" key="1"/>
<evidence type="ECO:0000255" key="2">
    <source>
        <dbReference type="PROSITE-ProRule" id="PRU00541"/>
    </source>
</evidence>
<evidence type="ECO:0000255" key="3">
    <source>
        <dbReference type="PROSITE-ProRule" id="PRU00542"/>
    </source>
</evidence>
<evidence type="ECO:0000256" key="4">
    <source>
        <dbReference type="SAM" id="MobiDB-lite"/>
    </source>
</evidence>
<evidence type="ECO:0000305" key="5"/>